<keyword id="KW-0903">Direct protein sequencing</keyword>
<keyword id="KW-1015">Disulfide bond</keyword>
<keyword id="KW-0372">Hormone</keyword>
<keyword id="KW-0527">Neuropeptide</keyword>
<keyword id="KW-0964">Secreted</keyword>
<name>MOIH1_CANPG</name>
<dbReference type="SMR" id="P81034"/>
<dbReference type="GO" id="GO:0005576">
    <property type="term" value="C:extracellular region"/>
    <property type="evidence" value="ECO:0007669"/>
    <property type="project" value="UniProtKB-SubCell"/>
</dbReference>
<dbReference type="GO" id="GO:0005184">
    <property type="term" value="F:neuropeptide hormone activity"/>
    <property type="evidence" value="ECO:0007669"/>
    <property type="project" value="InterPro"/>
</dbReference>
<dbReference type="GO" id="GO:0007623">
    <property type="term" value="P:circadian rhythm"/>
    <property type="evidence" value="ECO:0007669"/>
    <property type="project" value="TreeGrafter"/>
</dbReference>
<dbReference type="GO" id="GO:0007218">
    <property type="term" value="P:neuropeptide signaling pathway"/>
    <property type="evidence" value="ECO:0007669"/>
    <property type="project" value="UniProtKB-KW"/>
</dbReference>
<dbReference type="Gene3D" id="1.10.2010.10">
    <property type="entry name" value="Crustacean CHH/MIH/GIH neurohormone"/>
    <property type="match status" value="1"/>
</dbReference>
<dbReference type="InterPro" id="IPR018251">
    <property type="entry name" value="Crust_neurhormone_CS"/>
</dbReference>
<dbReference type="InterPro" id="IPR031098">
    <property type="entry name" value="Crust_neurohorm"/>
</dbReference>
<dbReference type="InterPro" id="IPR035957">
    <property type="entry name" value="Crust_neurohorm_sf"/>
</dbReference>
<dbReference type="InterPro" id="IPR001166">
    <property type="entry name" value="Hyperglycemic"/>
</dbReference>
<dbReference type="InterPro" id="IPR001262">
    <property type="entry name" value="Hyperglycemic2"/>
</dbReference>
<dbReference type="PANTHER" id="PTHR35981">
    <property type="entry name" value="ION TRANSPORT PEPTIDE, ISOFORM C"/>
    <property type="match status" value="1"/>
</dbReference>
<dbReference type="PANTHER" id="PTHR35981:SF2">
    <property type="entry name" value="ION TRANSPORT PEPTIDE, ISOFORM C"/>
    <property type="match status" value="1"/>
</dbReference>
<dbReference type="Pfam" id="PF01147">
    <property type="entry name" value="Crust_neurohorm"/>
    <property type="match status" value="1"/>
</dbReference>
<dbReference type="PRINTS" id="PR00549">
    <property type="entry name" value="HYPRGLYCEMC2"/>
</dbReference>
<dbReference type="PRINTS" id="PR00550">
    <property type="entry name" value="HYPRGLYCEMIC"/>
</dbReference>
<dbReference type="SUPFAM" id="SSF81778">
    <property type="entry name" value="Crustacean CHH/MIH/GIH neurohormone"/>
    <property type="match status" value="1"/>
</dbReference>
<dbReference type="PROSITE" id="PS01250">
    <property type="entry name" value="CHH_MIH_GIH"/>
    <property type="match status" value="1"/>
</dbReference>
<evidence type="ECO:0000250" key="1"/>
<evidence type="ECO:0000305" key="2"/>
<accession>P81034</accession>
<sequence length="78" mass="9241">RRINNDCQNFIGNRAMYEKVDWICKDCANIFRKDGLLNNCRSNCFYNTEFLWCIDATENTRNKEQLEQWAAILGAGWN</sequence>
<reference key="1">
    <citation type="journal article" date="1996" name="J. Biol. Chem.">
        <title>Structure and significance of mandibular organ-inhibiting hormone in the crab, Cancer pagurus. Involvement in multihormonal regulation of growth and reproduction.</title>
        <authorList>
            <person name="Wainwright G."/>
            <person name="Webster S.G."/>
            <person name="Wilkinson M.C."/>
            <person name="Chung J.S."/>
            <person name="Rees H.H."/>
        </authorList>
    </citation>
    <scope>PROTEIN SEQUENCE</scope>
    <source>
        <tissue>Sinus gland</tissue>
    </source>
</reference>
<comment type="function">
    <text>Represses the synthesis of methyl farnesoate, the precursor of insect juvenile hormone III in the mandibular organ.</text>
</comment>
<comment type="subcellular location">
    <subcellularLocation>
        <location>Secreted</location>
    </subcellularLocation>
</comment>
<comment type="tissue specificity">
    <text>Produced by the medulla terminalis X-organ in the eyestalks and transported to the sinus gland where it is stored and released.</text>
</comment>
<comment type="similarity">
    <text evidence="2">Belongs to the arthropod CHH/MIH/GIH/VIH hormone family.</text>
</comment>
<organism>
    <name type="scientific">Cancer pagurus</name>
    <name type="common">Rock crab</name>
    <dbReference type="NCBI Taxonomy" id="6755"/>
    <lineage>
        <taxon>Eukaryota</taxon>
        <taxon>Metazoa</taxon>
        <taxon>Ecdysozoa</taxon>
        <taxon>Arthropoda</taxon>
        <taxon>Crustacea</taxon>
        <taxon>Multicrustacea</taxon>
        <taxon>Malacostraca</taxon>
        <taxon>Eumalacostraca</taxon>
        <taxon>Eucarida</taxon>
        <taxon>Decapoda</taxon>
        <taxon>Pleocyemata</taxon>
        <taxon>Brachyura</taxon>
        <taxon>Eubrachyura</taxon>
        <taxon>Cancroidea</taxon>
        <taxon>Cancridae</taxon>
        <taxon>Cancer</taxon>
    </lineage>
</organism>
<feature type="chain" id="PRO_0000209866" description="Mandibular organ-inhibiting hormone 1">
    <location>
        <begin position="1"/>
        <end position="78"/>
    </location>
</feature>
<feature type="disulfide bond" evidence="1">
    <location>
        <begin position="7"/>
        <end position="44"/>
    </location>
</feature>
<feature type="disulfide bond" evidence="1">
    <location>
        <begin position="24"/>
        <end position="40"/>
    </location>
</feature>
<feature type="disulfide bond" evidence="1">
    <location>
        <begin position="27"/>
        <end position="53"/>
    </location>
</feature>
<proteinExistence type="evidence at protein level"/>
<protein>
    <recommendedName>
        <fullName>Mandibular organ-inhibiting hormone 1</fullName>
        <shortName>MOIH-1</shortName>
    </recommendedName>
</protein>